<gene>
    <name evidence="1" type="primary">rpsE</name>
    <name type="ordered locus">SSU98_0088</name>
</gene>
<reference key="1">
    <citation type="journal article" date="2007" name="PLoS ONE">
        <title>A glimpse of streptococcal toxic shock syndrome from comparative genomics of S. suis 2 Chinese isolates.</title>
        <authorList>
            <person name="Chen C."/>
            <person name="Tang J."/>
            <person name="Dong W."/>
            <person name="Wang C."/>
            <person name="Feng Y."/>
            <person name="Wang J."/>
            <person name="Zheng F."/>
            <person name="Pan X."/>
            <person name="Liu D."/>
            <person name="Li M."/>
            <person name="Song Y."/>
            <person name="Zhu X."/>
            <person name="Sun H."/>
            <person name="Feng T."/>
            <person name="Guo Z."/>
            <person name="Ju A."/>
            <person name="Ge J."/>
            <person name="Dong Y."/>
            <person name="Sun W."/>
            <person name="Jiang Y."/>
            <person name="Wang J."/>
            <person name="Yan J."/>
            <person name="Yang H."/>
            <person name="Wang X."/>
            <person name="Gao G.F."/>
            <person name="Yang R."/>
            <person name="Wang J."/>
            <person name="Yu J."/>
        </authorList>
    </citation>
    <scope>NUCLEOTIDE SEQUENCE [LARGE SCALE GENOMIC DNA]</scope>
    <source>
        <strain>98HAH33</strain>
    </source>
</reference>
<evidence type="ECO:0000255" key="1">
    <source>
        <dbReference type="HAMAP-Rule" id="MF_01307"/>
    </source>
</evidence>
<evidence type="ECO:0000305" key="2"/>
<proteinExistence type="inferred from homology"/>
<protein>
    <recommendedName>
        <fullName evidence="1">Small ribosomal subunit protein uS5</fullName>
    </recommendedName>
    <alternativeName>
        <fullName evidence="2">30S ribosomal protein S5</fullName>
    </alternativeName>
</protein>
<feature type="chain" id="PRO_0000323214" description="Small ribosomal subunit protein uS5">
    <location>
        <begin position="1"/>
        <end position="164"/>
    </location>
</feature>
<feature type="domain" description="S5 DRBM" evidence="1">
    <location>
        <begin position="10"/>
        <end position="73"/>
    </location>
</feature>
<name>RS5_STRS2</name>
<dbReference type="EMBL" id="CP000408">
    <property type="protein sequence ID" value="ABP91248.1"/>
    <property type="molecule type" value="Genomic_DNA"/>
</dbReference>
<dbReference type="SMR" id="A4VYQ9"/>
<dbReference type="KEGG" id="ssv:SSU98_0088"/>
<dbReference type="HOGENOM" id="CLU_065898_2_2_9"/>
<dbReference type="GO" id="GO:0015935">
    <property type="term" value="C:small ribosomal subunit"/>
    <property type="evidence" value="ECO:0007669"/>
    <property type="project" value="InterPro"/>
</dbReference>
<dbReference type="GO" id="GO:0019843">
    <property type="term" value="F:rRNA binding"/>
    <property type="evidence" value="ECO:0007669"/>
    <property type="project" value="UniProtKB-UniRule"/>
</dbReference>
<dbReference type="GO" id="GO:0003735">
    <property type="term" value="F:structural constituent of ribosome"/>
    <property type="evidence" value="ECO:0007669"/>
    <property type="project" value="InterPro"/>
</dbReference>
<dbReference type="GO" id="GO:0006412">
    <property type="term" value="P:translation"/>
    <property type="evidence" value="ECO:0007669"/>
    <property type="project" value="UniProtKB-UniRule"/>
</dbReference>
<dbReference type="FunFam" id="3.30.160.20:FF:000001">
    <property type="entry name" value="30S ribosomal protein S5"/>
    <property type="match status" value="1"/>
</dbReference>
<dbReference type="FunFam" id="3.30.230.10:FF:000002">
    <property type="entry name" value="30S ribosomal protein S5"/>
    <property type="match status" value="1"/>
</dbReference>
<dbReference type="Gene3D" id="3.30.160.20">
    <property type="match status" value="1"/>
</dbReference>
<dbReference type="Gene3D" id="3.30.230.10">
    <property type="match status" value="1"/>
</dbReference>
<dbReference type="HAMAP" id="MF_01307_B">
    <property type="entry name" value="Ribosomal_uS5_B"/>
    <property type="match status" value="1"/>
</dbReference>
<dbReference type="InterPro" id="IPR020568">
    <property type="entry name" value="Ribosomal_Su5_D2-typ_SF"/>
</dbReference>
<dbReference type="InterPro" id="IPR000851">
    <property type="entry name" value="Ribosomal_uS5"/>
</dbReference>
<dbReference type="InterPro" id="IPR005712">
    <property type="entry name" value="Ribosomal_uS5_bac-type"/>
</dbReference>
<dbReference type="InterPro" id="IPR005324">
    <property type="entry name" value="Ribosomal_uS5_C"/>
</dbReference>
<dbReference type="InterPro" id="IPR013810">
    <property type="entry name" value="Ribosomal_uS5_N"/>
</dbReference>
<dbReference type="InterPro" id="IPR018192">
    <property type="entry name" value="Ribosomal_uS5_N_CS"/>
</dbReference>
<dbReference type="InterPro" id="IPR014721">
    <property type="entry name" value="Ribsml_uS5_D2-typ_fold_subgr"/>
</dbReference>
<dbReference type="NCBIfam" id="TIGR01021">
    <property type="entry name" value="rpsE_bact"/>
    <property type="match status" value="1"/>
</dbReference>
<dbReference type="PANTHER" id="PTHR48277">
    <property type="entry name" value="MITOCHONDRIAL RIBOSOMAL PROTEIN S5"/>
    <property type="match status" value="1"/>
</dbReference>
<dbReference type="PANTHER" id="PTHR48277:SF1">
    <property type="entry name" value="MITOCHONDRIAL RIBOSOMAL PROTEIN S5"/>
    <property type="match status" value="1"/>
</dbReference>
<dbReference type="Pfam" id="PF00333">
    <property type="entry name" value="Ribosomal_S5"/>
    <property type="match status" value="1"/>
</dbReference>
<dbReference type="Pfam" id="PF03719">
    <property type="entry name" value="Ribosomal_S5_C"/>
    <property type="match status" value="1"/>
</dbReference>
<dbReference type="SUPFAM" id="SSF54768">
    <property type="entry name" value="dsRNA-binding domain-like"/>
    <property type="match status" value="1"/>
</dbReference>
<dbReference type="SUPFAM" id="SSF54211">
    <property type="entry name" value="Ribosomal protein S5 domain 2-like"/>
    <property type="match status" value="1"/>
</dbReference>
<dbReference type="PROSITE" id="PS00585">
    <property type="entry name" value="RIBOSOMAL_S5"/>
    <property type="match status" value="1"/>
</dbReference>
<dbReference type="PROSITE" id="PS50881">
    <property type="entry name" value="S5_DSRBD"/>
    <property type="match status" value="1"/>
</dbReference>
<accession>A4VYQ9</accession>
<keyword id="KW-0687">Ribonucleoprotein</keyword>
<keyword id="KW-0689">Ribosomal protein</keyword>
<keyword id="KW-0694">RNA-binding</keyword>
<keyword id="KW-0699">rRNA-binding</keyword>
<organism>
    <name type="scientific">Streptococcus suis (strain 98HAH33)</name>
    <dbReference type="NCBI Taxonomy" id="391296"/>
    <lineage>
        <taxon>Bacteria</taxon>
        <taxon>Bacillati</taxon>
        <taxon>Bacillota</taxon>
        <taxon>Bacilli</taxon>
        <taxon>Lactobacillales</taxon>
        <taxon>Streptococcaceae</taxon>
        <taxon>Streptococcus</taxon>
    </lineage>
</organism>
<comment type="function">
    <text evidence="1">With S4 and S12 plays an important role in translational accuracy.</text>
</comment>
<comment type="function">
    <text evidence="1">Located at the back of the 30S subunit body where it stabilizes the conformation of the head with respect to the body.</text>
</comment>
<comment type="subunit">
    <text evidence="1">Part of the 30S ribosomal subunit. Contacts proteins S4 and S8.</text>
</comment>
<comment type="domain">
    <text>The N-terminal domain interacts with the head of the 30S subunit; the C-terminal domain interacts with the body and contacts protein S4. The interaction surface between S4 and S5 is involved in control of translational fidelity.</text>
</comment>
<comment type="similarity">
    <text evidence="1">Belongs to the universal ribosomal protein uS5 family.</text>
</comment>
<sequence length="164" mass="17155">MAFKDNAVEIEERVVAINRVTKVVKGGRRLRFAALVVVGDRNGRVGFGTGKAQEVPEAIRKAVESAKKNMIEVPMVGTTIPHEVRSEFGGARVLLKPASEGSGVAAGGATRAVIELAGIADVTSKSLGSNTPINIVRATVEGLKQLKRAEEVAALRGISVSDLA</sequence>